<protein>
    <recommendedName>
        <fullName>Poly [ADP-ribose] polymerase 1</fullName>
        <shortName>PARP-1</shortName>
        <ecNumber evidence="1">2.4.2.30</ecNumber>
    </recommendedName>
    <alternativeName>
        <fullName>ADP-ribosyltransferase diphtheria toxin-like 1</fullName>
        <shortName>ARTD1</shortName>
    </alternativeName>
    <alternativeName>
        <fullName evidence="1">DNA ADP-ribosyltransferase PARP1</fullName>
        <ecNumber evidence="1">2.4.2.-</ecNumber>
    </alternativeName>
    <alternativeName>
        <fullName>NAD(+) ADP-ribosyltransferase 1</fullName>
        <shortName>ADPRT 1</shortName>
    </alternativeName>
    <alternativeName>
        <fullName>Poly[ADP-ribose] synthase 1</fullName>
    </alternativeName>
    <alternativeName>
        <fullName evidence="1">Protein poly-ADP-ribosyltransferase PARP1</fullName>
        <ecNumber evidence="1">2.4.2.-</ecNumber>
    </alternativeName>
</protein>
<dbReference type="EC" id="2.4.2.30" evidence="1"/>
<dbReference type="EC" id="2.4.2.-" evidence="1"/>
<dbReference type="EMBL" id="X52690">
    <property type="protein sequence ID" value="CAA36917.1"/>
    <property type="molecule type" value="mRNA"/>
</dbReference>
<dbReference type="PIR" id="JH0581">
    <property type="entry name" value="JH0581"/>
</dbReference>
<dbReference type="PDB" id="1A26">
    <property type="method" value="X-ray"/>
    <property type="resolution" value="2.25 A"/>
    <property type="chains" value="A=652-1011"/>
</dbReference>
<dbReference type="PDB" id="1EFY">
    <property type="method" value="X-ray"/>
    <property type="resolution" value="2.20 A"/>
    <property type="chains" value="A=659-1008"/>
</dbReference>
<dbReference type="PDB" id="1PAX">
    <property type="method" value="X-ray"/>
    <property type="resolution" value="2.40 A"/>
    <property type="chains" value="A=652-1011"/>
</dbReference>
<dbReference type="PDB" id="2PAW">
    <property type="method" value="X-ray"/>
    <property type="resolution" value="2.30 A"/>
    <property type="chains" value="A=652-1011"/>
</dbReference>
<dbReference type="PDB" id="2PAX">
    <property type="method" value="X-ray"/>
    <property type="resolution" value="2.40 A"/>
    <property type="chains" value="A=652-1011"/>
</dbReference>
<dbReference type="PDB" id="3PAX">
    <property type="method" value="X-ray"/>
    <property type="resolution" value="2.40 A"/>
    <property type="chains" value="A=652-1011"/>
</dbReference>
<dbReference type="PDB" id="4PAX">
    <property type="method" value="X-ray"/>
    <property type="resolution" value="2.80 A"/>
    <property type="chains" value="A=652-1011"/>
</dbReference>
<dbReference type="PDB" id="6I8M">
    <property type="method" value="X-ray"/>
    <property type="resolution" value="2.10 A"/>
    <property type="chains" value="A=651-1011"/>
</dbReference>
<dbReference type="PDB" id="6I8T">
    <property type="method" value="X-ray"/>
    <property type="resolution" value="2.10 A"/>
    <property type="chains" value="A=651-1011"/>
</dbReference>
<dbReference type="PDBsum" id="1A26"/>
<dbReference type="PDBsum" id="1EFY"/>
<dbReference type="PDBsum" id="1PAX"/>
<dbReference type="PDBsum" id="2PAW"/>
<dbReference type="PDBsum" id="2PAX"/>
<dbReference type="PDBsum" id="3PAX"/>
<dbReference type="PDBsum" id="4PAX"/>
<dbReference type="PDBsum" id="6I8M"/>
<dbReference type="PDBsum" id="6I8T"/>
<dbReference type="SMR" id="P26446"/>
<dbReference type="FunCoup" id="P26446">
    <property type="interactions" value="2399"/>
</dbReference>
<dbReference type="STRING" id="9031.ENSGALP00000038037"/>
<dbReference type="PaxDb" id="9031-ENSGALP00000015000"/>
<dbReference type="VEuPathDB" id="HostDB:geneid_396199"/>
<dbReference type="eggNOG" id="KOG1037">
    <property type="taxonomic scope" value="Eukaryota"/>
</dbReference>
<dbReference type="InParanoid" id="P26446"/>
<dbReference type="OrthoDB" id="429950at2759"/>
<dbReference type="PhylomeDB" id="P26446"/>
<dbReference type="EvolutionaryTrace" id="P26446"/>
<dbReference type="Proteomes" id="UP000000539">
    <property type="component" value="Unassembled WGS sequence"/>
</dbReference>
<dbReference type="GO" id="GO:0000785">
    <property type="term" value="C:chromatin"/>
    <property type="evidence" value="ECO:0000250"/>
    <property type="project" value="UniProtKB"/>
</dbReference>
<dbReference type="GO" id="GO:0005829">
    <property type="term" value="C:cytosol"/>
    <property type="evidence" value="ECO:0000250"/>
    <property type="project" value="UniProtKB"/>
</dbReference>
<dbReference type="GO" id="GO:0043596">
    <property type="term" value="C:nuclear replication fork"/>
    <property type="evidence" value="ECO:0000250"/>
    <property type="project" value="UniProtKB"/>
</dbReference>
<dbReference type="GO" id="GO:0005730">
    <property type="term" value="C:nucleolus"/>
    <property type="evidence" value="ECO:0000318"/>
    <property type="project" value="GO_Central"/>
</dbReference>
<dbReference type="GO" id="GO:0035861">
    <property type="term" value="C:site of double-strand break"/>
    <property type="evidence" value="ECO:0000250"/>
    <property type="project" value="UniProtKB"/>
</dbReference>
<dbReference type="GO" id="GO:0003684">
    <property type="term" value="F:damaged DNA binding"/>
    <property type="evidence" value="ECO:0000250"/>
    <property type="project" value="UniProtKB"/>
</dbReference>
<dbReference type="GO" id="GO:0051287">
    <property type="term" value="F:NAD binding"/>
    <property type="evidence" value="ECO:0007669"/>
    <property type="project" value="InterPro"/>
</dbReference>
<dbReference type="GO" id="GO:0003950">
    <property type="term" value="F:NAD+ poly-ADP-ribosyltransferase activity"/>
    <property type="evidence" value="ECO:0000250"/>
    <property type="project" value="UniProtKB"/>
</dbReference>
<dbReference type="GO" id="GO:1990404">
    <property type="term" value="F:NAD+-protein mono-ADP-ribosyltransferase activity"/>
    <property type="evidence" value="ECO:0000250"/>
    <property type="project" value="UniProtKB"/>
</dbReference>
<dbReference type="GO" id="GO:0140806">
    <property type="term" value="F:NAD+-protein-aspartate ADP-ribosyltransferase activity"/>
    <property type="evidence" value="ECO:0000250"/>
    <property type="project" value="UniProtKB"/>
</dbReference>
<dbReference type="GO" id="GO:0140807">
    <property type="term" value="F:NAD+-protein-glutamate ADP-ribosyltransferase activity"/>
    <property type="evidence" value="ECO:0000250"/>
    <property type="project" value="UniProtKB"/>
</dbReference>
<dbReference type="GO" id="GO:0140815">
    <property type="term" value="F:NAD+-protein-histidine ADP-ribosyltransferase activity"/>
    <property type="evidence" value="ECO:0000250"/>
    <property type="project" value="UniProtKB"/>
</dbReference>
<dbReference type="GO" id="GO:0140805">
    <property type="term" value="F:NAD+-protein-serine ADP-ribosyltransferase activity"/>
    <property type="evidence" value="ECO:0000250"/>
    <property type="project" value="UniProtKB"/>
</dbReference>
<dbReference type="GO" id="GO:0140808">
    <property type="term" value="F:NAD+-protein-tyrosine ADP-ribosyltransferase activity"/>
    <property type="evidence" value="ECO:0000250"/>
    <property type="project" value="UniProtKB"/>
</dbReference>
<dbReference type="GO" id="GO:0031491">
    <property type="term" value="F:nucleosome binding"/>
    <property type="evidence" value="ECO:0000250"/>
    <property type="project" value="UniProtKB"/>
</dbReference>
<dbReference type="GO" id="GO:0016779">
    <property type="term" value="F:nucleotidyltransferase activity"/>
    <property type="evidence" value="ECO:0007669"/>
    <property type="project" value="UniProtKB-KW"/>
</dbReference>
<dbReference type="GO" id="GO:0042803">
    <property type="term" value="F:protein homodimerization activity"/>
    <property type="evidence" value="ECO:0000250"/>
    <property type="project" value="UniProtKB"/>
</dbReference>
<dbReference type="GO" id="GO:0008270">
    <property type="term" value="F:zinc ion binding"/>
    <property type="evidence" value="ECO:0000250"/>
    <property type="project" value="UniProtKB"/>
</dbReference>
<dbReference type="GO" id="GO:1990966">
    <property type="term" value="P:ATP generation from poly-ADP-D-ribose"/>
    <property type="evidence" value="ECO:0000250"/>
    <property type="project" value="UniProtKB"/>
</dbReference>
<dbReference type="GO" id="GO:0030592">
    <property type="term" value="P:DNA ADP-ribosylation"/>
    <property type="evidence" value="ECO:0000250"/>
    <property type="project" value="UniProtKB"/>
</dbReference>
<dbReference type="GO" id="GO:0006302">
    <property type="term" value="P:double-strand break repair"/>
    <property type="evidence" value="ECO:0000318"/>
    <property type="project" value="GO_Central"/>
</dbReference>
<dbReference type="GO" id="GO:0045087">
    <property type="term" value="P:innate immune response"/>
    <property type="evidence" value="ECO:0007669"/>
    <property type="project" value="UniProtKB-KW"/>
</dbReference>
<dbReference type="GO" id="GO:0045824">
    <property type="term" value="P:negative regulation of innate immune response"/>
    <property type="evidence" value="ECO:0000250"/>
    <property type="project" value="UniProtKB"/>
</dbReference>
<dbReference type="GO" id="GO:0000122">
    <property type="term" value="P:negative regulation of transcription by RNA polymerase II"/>
    <property type="evidence" value="ECO:0000250"/>
    <property type="project" value="UniProtKB"/>
</dbReference>
<dbReference type="GO" id="GO:1905168">
    <property type="term" value="P:positive regulation of double-strand break repair via homologous recombination"/>
    <property type="evidence" value="ECO:0000250"/>
    <property type="project" value="UniProtKB"/>
</dbReference>
<dbReference type="GO" id="GO:1903518">
    <property type="term" value="P:positive regulation of single strand break repair"/>
    <property type="evidence" value="ECO:0000318"/>
    <property type="project" value="GO_Central"/>
</dbReference>
<dbReference type="GO" id="GO:0070213">
    <property type="term" value="P:protein auto-ADP-ribosylation"/>
    <property type="evidence" value="ECO:0000250"/>
    <property type="project" value="UniProtKB"/>
</dbReference>
<dbReference type="GO" id="GO:0070212">
    <property type="term" value="P:protein poly-ADP-ribosylation"/>
    <property type="evidence" value="ECO:0000314"/>
    <property type="project" value="UniProtKB"/>
</dbReference>
<dbReference type="GO" id="GO:0071932">
    <property type="term" value="P:replication fork reversal"/>
    <property type="evidence" value="ECO:0000250"/>
    <property type="project" value="UniProtKB"/>
</dbReference>
<dbReference type="CDD" id="cd17747">
    <property type="entry name" value="BRCT_PARP1"/>
    <property type="match status" value="1"/>
</dbReference>
<dbReference type="CDD" id="cd01437">
    <property type="entry name" value="parp_like"/>
    <property type="match status" value="1"/>
</dbReference>
<dbReference type="CDD" id="cd08001">
    <property type="entry name" value="WGR_PARP1_like"/>
    <property type="match status" value="1"/>
</dbReference>
<dbReference type="FunFam" id="1.10.20.130:FF:000001">
    <property type="entry name" value="Poly [ADP-ribose] polymerase"/>
    <property type="match status" value="1"/>
</dbReference>
<dbReference type="FunFam" id="1.20.142.10:FF:000001">
    <property type="entry name" value="Poly [ADP-ribose] polymerase"/>
    <property type="match status" value="1"/>
</dbReference>
<dbReference type="FunFam" id="2.20.25.630:FF:000001">
    <property type="entry name" value="Poly [ADP-ribose] polymerase"/>
    <property type="match status" value="1"/>
</dbReference>
<dbReference type="FunFam" id="3.30.1740.10:FF:000002">
    <property type="entry name" value="Poly [ADP-ribose] polymerase"/>
    <property type="match status" value="1"/>
</dbReference>
<dbReference type="FunFam" id="3.30.1740.10:FF:000003">
    <property type="entry name" value="Poly [ADP-ribose] polymerase"/>
    <property type="match status" value="1"/>
</dbReference>
<dbReference type="FunFam" id="3.40.50.10190:FF:000030">
    <property type="entry name" value="Poly [ADP-ribose] polymerase"/>
    <property type="match status" value="1"/>
</dbReference>
<dbReference type="FunFam" id="3.90.228.10:FF:000002">
    <property type="entry name" value="Poly [ADP-ribose] polymerase"/>
    <property type="match status" value="1"/>
</dbReference>
<dbReference type="Gene3D" id="1.10.20.130">
    <property type="match status" value="1"/>
</dbReference>
<dbReference type="Gene3D" id="2.20.25.630">
    <property type="match status" value="1"/>
</dbReference>
<dbReference type="Gene3D" id="3.90.228.10">
    <property type="match status" value="1"/>
</dbReference>
<dbReference type="Gene3D" id="3.40.50.10190">
    <property type="entry name" value="BRCT domain"/>
    <property type="match status" value="1"/>
</dbReference>
<dbReference type="Gene3D" id="1.20.142.10">
    <property type="entry name" value="Poly(ADP-ribose) polymerase, regulatory domain"/>
    <property type="match status" value="1"/>
</dbReference>
<dbReference type="Gene3D" id="3.30.1740.10">
    <property type="entry name" value="Zinc finger, PARP-type"/>
    <property type="match status" value="2"/>
</dbReference>
<dbReference type="InterPro" id="IPR050800">
    <property type="entry name" value="ARTD/PARP"/>
</dbReference>
<dbReference type="InterPro" id="IPR001357">
    <property type="entry name" value="BRCT_dom"/>
</dbReference>
<dbReference type="InterPro" id="IPR036420">
    <property type="entry name" value="BRCT_dom_sf"/>
</dbReference>
<dbReference type="InterPro" id="IPR038650">
    <property type="entry name" value="PADR1_C_dom_sf"/>
</dbReference>
<dbReference type="InterPro" id="IPR008288">
    <property type="entry name" value="PARP"/>
</dbReference>
<dbReference type="InterPro" id="IPR049296">
    <property type="entry name" value="PARP1-like_PADR1_N"/>
</dbReference>
<dbReference type="InterPro" id="IPR012982">
    <property type="entry name" value="PARP1-like_PADR1_Zn_ribbon"/>
</dbReference>
<dbReference type="InterPro" id="IPR012317">
    <property type="entry name" value="Poly(ADP-ribose)pol_cat_dom"/>
</dbReference>
<dbReference type="InterPro" id="IPR004102">
    <property type="entry name" value="Poly(ADP-ribose)pol_reg_dom"/>
</dbReference>
<dbReference type="InterPro" id="IPR036616">
    <property type="entry name" value="Poly(ADP-ribose)pol_reg_dom_sf"/>
</dbReference>
<dbReference type="InterPro" id="IPR036930">
    <property type="entry name" value="WGR_dom_sf"/>
</dbReference>
<dbReference type="InterPro" id="IPR008893">
    <property type="entry name" value="WGR_domain"/>
</dbReference>
<dbReference type="InterPro" id="IPR001510">
    <property type="entry name" value="Znf_PARP"/>
</dbReference>
<dbReference type="InterPro" id="IPR036957">
    <property type="entry name" value="Znf_PARP_sf"/>
</dbReference>
<dbReference type="PANTHER" id="PTHR10459">
    <property type="entry name" value="DNA LIGASE"/>
    <property type="match status" value="1"/>
</dbReference>
<dbReference type="PANTHER" id="PTHR10459:SF112">
    <property type="entry name" value="POLY [ADP-RIBOSE] POLYMERASE 1"/>
    <property type="match status" value="1"/>
</dbReference>
<dbReference type="Pfam" id="PF00533">
    <property type="entry name" value="BRCT"/>
    <property type="match status" value="1"/>
</dbReference>
<dbReference type="Pfam" id="PF21728">
    <property type="entry name" value="PADR1_N"/>
    <property type="match status" value="1"/>
</dbReference>
<dbReference type="Pfam" id="PF00644">
    <property type="entry name" value="PARP"/>
    <property type="match status" value="1"/>
</dbReference>
<dbReference type="Pfam" id="PF02877">
    <property type="entry name" value="PARP_reg"/>
    <property type="match status" value="1"/>
</dbReference>
<dbReference type="Pfam" id="PF05406">
    <property type="entry name" value="WGR"/>
    <property type="match status" value="1"/>
</dbReference>
<dbReference type="Pfam" id="PF00645">
    <property type="entry name" value="zf-PARP"/>
    <property type="match status" value="2"/>
</dbReference>
<dbReference type="Pfam" id="PF08063">
    <property type="entry name" value="Zn_ribbon_PADR1"/>
    <property type="match status" value="1"/>
</dbReference>
<dbReference type="PIRSF" id="PIRSF000489">
    <property type="entry name" value="NAD_ADPRT"/>
    <property type="match status" value="1"/>
</dbReference>
<dbReference type="SMART" id="SM00292">
    <property type="entry name" value="BRCT"/>
    <property type="match status" value="1"/>
</dbReference>
<dbReference type="SMART" id="SM01335">
    <property type="entry name" value="PADR1"/>
    <property type="match status" value="1"/>
</dbReference>
<dbReference type="SMART" id="SM00773">
    <property type="entry name" value="WGR"/>
    <property type="match status" value="1"/>
</dbReference>
<dbReference type="SMART" id="SM01336">
    <property type="entry name" value="zf-PARP"/>
    <property type="match status" value="2"/>
</dbReference>
<dbReference type="SUPFAM" id="SSF56399">
    <property type="entry name" value="ADP-ribosylation"/>
    <property type="match status" value="1"/>
</dbReference>
<dbReference type="SUPFAM" id="SSF52113">
    <property type="entry name" value="BRCT domain"/>
    <property type="match status" value="1"/>
</dbReference>
<dbReference type="SUPFAM" id="SSF47587">
    <property type="entry name" value="Domain of poly(ADP-ribose) polymerase"/>
    <property type="match status" value="1"/>
</dbReference>
<dbReference type="SUPFAM" id="SSF57716">
    <property type="entry name" value="Glucocorticoid receptor-like (DNA-binding domain)"/>
    <property type="match status" value="2"/>
</dbReference>
<dbReference type="SUPFAM" id="SSF142921">
    <property type="entry name" value="WGR domain-like"/>
    <property type="match status" value="1"/>
</dbReference>
<dbReference type="PROSITE" id="PS50172">
    <property type="entry name" value="BRCT"/>
    <property type="match status" value="1"/>
</dbReference>
<dbReference type="PROSITE" id="PS52007">
    <property type="entry name" value="PADR1"/>
    <property type="match status" value="1"/>
</dbReference>
<dbReference type="PROSITE" id="PS51060">
    <property type="entry name" value="PARP_ALPHA_HD"/>
    <property type="match status" value="1"/>
</dbReference>
<dbReference type="PROSITE" id="PS51059">
    <property type="entry name" value="PARP_CATALYTIC"/>
    <property type="match status" value="1"/>
</dbReference>
<dbReference type="PROSITE" id="PS51977">
    <property type="entry name" value="WGR"/>
    <property type="match status" value="1"/>
</dbReference>
<dbReference type="PROSITE" id="PS00347">
    <property type="entry name" value="ZF_PARP_1"/>
    <property type="match status" value="2"/>
</dbReference>
<dbReference type="PROSITE" id="PS50064">
    <property type="entry name" value="ZF_PARP_2"/>
    <property type="match status" value="2"/>
</dbReference>
<accession>P26446</accession>
<comment type="function">
    <text evidence="1 2 3">Poly-ADP-ribosyltransferase that mediates poly-ADP-ribosylation of proteins and plays a key role in DNA repair (By similarity). Mediates glutamate, aspartate, serine, histidine or tyrosine ADP-ribosylation of proteins: the ADP-D-ribosyl group of NAD(+) is transferred to the acceptor carboxyl group of target residues and further ADP-ribosyl groups are transferred to the 2'-position of the terminal adenosine moiety, building up a polymer with an average chain length of 20-30 units. Serine ADP-ribosylation of proteins constitutes the primary form of ADP-ribosylation of proteins in response to DNA damage (By similarity). Specificity for the different amino acids is conferred by interacting factors, such as hpf1 and nmnat1 (By similarity). Following interaction with hpf1, catalyzes serine ADP-ribosylation of target proteins; hpf1 confers serine specificity by completing the parp1 active site. Also catalyzes tyrosine ADP-ribosylation of target proteins following interaction with hpf1 (By similarity). Following interaction with nmnat1, catalyzes glutamate and aspartate ADP-ribosylation of target proteins; nmnat1 confers glutamate and aspartate specificity (By similarity). Parp1 initiates the repair of DNA breaks: recognizes and binds DNA breaks within chromatin and recruits hpf1, licensing serine ADP-ribosylation of target proteins, such as histones (H2BS6ADPr and H3S10ADPr), thereby promoting decompaction of chromatin and the recruitment of repair factors leading to the reparation of DNA strand breaks. In addition to base excision repair (BER) pathway, also involved in double-strand breaks (DSBs) repair. Mediates the poly-ADP-ribosylation of a number of proteins. In addition to proteins, also able to ADP-ribosylate DNA: catalyzes ADP-ribosylation of DNA strand break termini containing terminal phosphates and a 2'-OH group in single- and double-stranded DNA, respectively (By similarity). Parp1-mediated DNA repair in neurons plays a role in sleep: senses DNA damage in neurons and promotes sleep, facilitating efficient DNA repair (By similarity). In addition to DNA repair, also involved in other processes, such as transcription regulation, programmed cell death, membrane repair, adipogenesis and innate immunity (By similarity). Acts as a repressor of transcription: binds to nucleosomes and modulates chromatin structure in a manner similar to histone H1, thereby altering RNA polymerase II. Acts both as a positive and negative regulator of transcription elongation, depending on the context (By similarity). Poly-ADP-ribose chains generated by parp1 also play a role in poly-ADP-ribose-dependent cell death, a process named parthanatos. Also acts as a negative regulator of the cGAS-STING pathway by mediating poly-ADP-ribosylation and inactivation of cgas. Acts as a negative regulator of adipogenesis by catalyzing poly ADP-ribosylation of histone H2B on 'Glu-35' (H2BE35ADPr) (By similarity).</text>
</comment>
<comment type="catalytic activity">
    <reaction evidence="1">
        <text>NAD(+) + (ADP-D-ribosyl)n-acceptor = nicotinamide + (ADP-D-ribosyl)n+1-acceptor + H(+).</text>
        <dbReference type="EC" id="2.4.2.30"/>
    </reaction>
</comment>
<comment type="catalytic activity">
    <reaction evidence="1">
        <text>L-seryl-[protein] + NAD(+) = O-(ADP-D-ribosyl)-L-seryl-[protein] + nicotinamide + H(+)</text>
        <dbReference type="Rhea" id="RHEA:58232"/>
        <dbReference type="Rhea" id="RHEA-COMP:9863"/>
        <dbReference type="Rhea" id="RHEA-COMP:15091"/>
        <dbReference type="ChEBI" id="CHEBI:15378"/>
        <dbReference type="ChEBI" id="CHEBI:17154"/>
        <dbReference type="ChEBI" id="CHEBI:29999"/>
        <dbReference type="ChEBI" id="CHEBI:57540"/>
        <dbReference type="ChEBI" id="CHEBI:142556"/>
    </reaction>
    <physiologicalReaction direction="left-to-right" evidence="1">
        <dbReference type="Rhea" id="RHEA:58233"/>
    </physiologicalReaction>
</comment>
<comment type="catalytic activity">
    <reaction evidence="2">
        <text>L-aspartyl-[protein] + NAD(+) = 4-O-(ADP-D-ribosyl)-L-aspartyl-[protein] + nicotinamide</text>
        <dbReference type="Rhea" id="RHEA:54424"/>
        <dbReference type="Rhea" id="RHEA-COMP:9867"/>
        <dbReference type="Rhea" id="RHEA-COMP:13832"/>
        <dbReference type="ChEBI" id="CHEBI:17154"/>
        <dbReference type="ChEBI" id="CHEBI:29961"/>
        <dbReference type="ChEBI" id="CHEBI:57540"/>
        <dbReference type="ChEBI" id="CHEBI:138102"/>
    </reaction>
    <physiologicalReaction direction="left-to-right" evidence="2">
        <dbReference type="Rhea" id="RHEA:54425"/>
    </physiologicalReaction>
</comment>
<comment type="catalytic activity">
    <reaction evidence="2">
        <text>L-glutamyl-[protein] + NAD(+) = 5-O-(ADP-D-ribosyl)-L-glutamyl-[protein] + nicotinamide</text>
        <dbReference type="Rhea" id="RHEA:58224"/>
        <dbReference type="Rhea" id="RHEA-COMP:10208"/>
        <dbReference type="Rhea" id="RHEA-COMP:15089"/>
        <dbReference type="ChEBI" id="CHEBI:17154"/>
        <dbReference type="ChEBI" id="CHEBI:29973"/>
        <dbReference type="ChEBI" id="CHEBI:57540"/>
        <dbReference type="ChEBI" id="CHEBI:142540"/>
    </reaction>
    <physiologicalReaction direction="left-to-right" evidence="2">
        <dbReference type="Rhea" id="RHEA:58225"/>
    </physiologicalReaction>
</comment>
<comment type="catalytic activity">
    <reaction evidence="1">
        <text>L-tyrosyl-[protein] + NAD(+) = O-(ADP-D-ribosyl)-L-tyrosyl-[protein] + nicotinamide + H(+)</text>
        <dbReference type="Rhea" id="RHEA:58236"/>
        <dbReference type="Rhea" id="RHEA-COMP:10136"/>
        <dbReference type="Rhea" id="RHEA-COMP:15092"/>
        <dbReference type="ChEBI" id="CHEBI:15378"/>
        <dbReference type="ChEBI" id="CHEBI:17154"/>
        <dbReference type="ChEBI" id="CHEBI:46858"/>
        <dbReference type="ChEBI" id="CHEBI:57540"/>
        <dbReference type="ChEBI" id="CHEBI:142557"/>
    </reaction>
    <physiologicalReaction direction="left-to-right" evidence="1">
        <dbReference type="Rhea" id="RHEA:58237"/>
    </physiologicalReaction>
</comment>
<comment type="catalytic activity">
    <reaction evidence="1">
        <text>L-histidyl-[protein] + NAD(+) = N(tele)-(ADP-D-ribosyl)-L-histidyl-[protein] + nicotinamide + H(+)</text>
        <dbReference type="Rhea" id="RHEA:72071"/>
        <dbReference type="Rhea" id="RHEA-COMP:9745"/>
        <dbReference type="Rhea" id="RHEA-COMP:18085"/>
        <dbReference type="ChEBI" id="CHEBI:15378"/>
        <dbReference type="ChEBI" id="CHEBI:17154"/>
        <dbReference type="ChEBI" id="CHEBI:29979"/>
        <dbReference type="ChEBI" id="CHEBI:57540"/>
        <dbReference type="ChEBI" id="CHEBI:191398"/>
    </reaction>
    <physiologicalReaction direction="left-to-right" evidence="1">
        <dbReference type="Rhea" id="RHEA:72072"/>
    </physiologicalReaction>
</comment>
<comment type="activity regulation">
    <text evidence="1">ADP-ribosyltransferase activity is regulated via an allosteric activation mechanism. In absence of activation signal, parp1 is autoinhibited by the PARP alpha-helical domain (also named HD region), which prevents effective NAD(+)-binding. Activity is highly stimulated by signals, such as DNA strand breaks. Binding to damaged DNA unfolds the PARP alpha-helical domain, relieving autoinhibition. Poly-ADP-ribosyltransferase activity is tightly regulated and parp1 is removed from damaged chromatin following initial poly-ADP-ribosylation of chromatin to avoid prolonged residence (trapping) that has cytotoxic consequences. A number of factors or post-translational modifications (auto-poly-ADP-ribosylation) promote parp1 removal from chromatin.</text>
</comment>
<comment type="subunit">
    <text evidence="1">Homodimer; PARP-type zinc-fingers from separate parp1 molecules form a dimer module that specifically recognizes DNA strand breaks.</text>
</comment>
<comment type="subcellular location">
    <subcellularLocation>
        <location evidence="1">Chromosome</location>
    </subcellularLocation>
    <subcellularLocation>
        <location evidence="1">Nucleus</location>
    </subcellularLocation>
    <subcellularLocation>
        <location evidence="1">Nucleus</location>
        <location evidence="1">Nucleolus</location>
    </subcellularLocation>
    <subcellularLocation>
        <location evidence="1">Cytoplasm</location>
        <location evidence="1">Cytosol</location>
    </subcellularLocation>
    <text evidence="1">Localizes to sites of DNA damage. Recognizes (via PARP-type zinc-fingers) and binds DNA strand breaks. Also binds normal/undamaged chromatin. Auto poly-ADP-ribosylation promotes dissociation from chromatin.</text>
</comment>
<comment type="domain">
    <text evidence="1">The two PARP-type zinc-fingers (also named Zn1 and Zn2) specifically recognize DNA strand breaks: PARP-type zinc-finger 1 binds PARP-type zinc-finger 2 from a separate parp1 molecule to form a dimeric module that specifically recognizes DNA strand breaks.</text>
</comment>
<comment type="domain">
    <text evidence="1">The PADR1-type (also named Zn3) zinc-finger mediates an interdomain contact and is required for the ability of parp1 to regulate chromatin structure.</text>
</comment>
<comment type="domain">
    <text evidence="1">The BRCT domain is able to bind intact DNA without activating the poly-ADP-ribosyltransferase activity. The BRCT domain mediates DNA intrastrand transfer (named 'monkey-bar mechanism') that allows rapid movements of parp1 through the nucleus.</text>
</comment>
<comment type="domain">
    <text evidence="4">The WGR domain bridges two nucleosomes, with the broken DNA aligned in a position suitable for ligation. The bridging induces structural changes in parp1 that signal the recognition of a DNA break to the catalytic domain of parp1.</text>
</comment>
<comment type="domain">
    <text evidence="1">The PARP alpha-helical domain (also named HD region) prevents effective NAD(+)-binding in absence of activation signal. Binding to damaged DNA unfolds the PARP alpha-helical domain, relieving autoinhibition.</text>
</comment>
<comment type="PTM">
    <text evidence="1">Poly-ADP-ribosylated on serine, glutamate and aspartate residues by autocatalysis. Auto-ADP-ribosylation on serine takes place following interaction with HPF1. Auto poly-ADP-ribosylation on serine residues promotes its dissociation from chromatin.</text>
</comment>
<comment type="similarity">
    <text evidence="11 13">Belongs to the ARTD/PARP family.</text>
</comment>
<feature type="chain" id="PRO_0000211322" description="Poly [ADP-ribose] polymerase 1">
    <location>
        <begin position="1"/>
        <end position="1011"/>
    </location>
</feature>
<feature type="domain" description="PADR1 zinc-binding" evidence="11">
    <location>
        <begin position="224"/>
        <end position="358"/>
    </location>
</feature>
<feature type="domain" description="BRCT" evidence="6">
    <location>
        <begin position="382"/>
        <end position="473"/>
    </location>
</feature>
<feature type="domain" description="WGR" evidence="10">
    <location>
        <begin position="539"/>
        <end position="635"/>
    </location>
</feature>
<feature type="domain" description="PARP alpha-helical" evidence="9">
    <location>
        <begin position="659"/>
        <end position="776"/>
    </location>
</feature>
<feature type="domain" description="PARP catalytic" evidence="8">
    <location>
        <begin position="785"/>
        <end position="1011"/>
    </location>
</feature>
<feature type="zinc finger region" description="PARP-type 1" evidence="7">
    <location>
        <begin position="9"/>
        <end position="91"/>
    </location>
</feature>
<feature type="zinc finger region" description="PARP-type 2" evidence="7">
    <location>
        <begin position="113"/>
        <end position="203"/>
    </location>
</feature>
<feature type="region of interest" description="Disordered" evidence="12">
    <location>
        <begin position="198"/>
        <end position="235"/>
    </location>
</feature>
<feature type="region of interest" description="Zinc ribbon" evidence="11">
    <location>
        <begin position="289"/>
        <end position="331"/>
    </location>
</feature>
<feature type="region of interest" description="Disordered" evidence="12">
    <location>
        <begin position="359"/>
        <end position="378"/>
    </location>
</feature>
<feature type="region of interest" description="Automodification domain" evidence="1">
    <location>
        <begin position="371"/>
        <end position="522"/>
    </location>
</feature>
<feature type="region of interest" description="Disordered" evidence="12">
    <location>
        <begin position="496"/>
        <end position="519"/>
    </location>
</feature>
<feature type="short sequence motif" description="Nuclear localization signal" evidence="1">
    <location>
        <begin position="207"/>
        <end position="209"/>
    </location>
</feature>
<feature type="short sequence motif" description="Nuclear localization signal" evidence="1">
    <location>
        <begin position="220"/>
        <end position="225"/>
    </location>
</feature>
<feature type="compositionally biased region" description="Basic and acidic residues" evidence="12">
    <location>
        <begin position="225"/>
        <end position="235"/>
    </location>
</feature>
<feature type="compositionally biased region" description="Basic and acidic residues" evidence="12">
    <location>
        <begin position="506"/>
        <end position="519"/>
    </location>
</feature>
<feature type="active site" description="For poly [ADP-ribose] polymerase activity" evidence="1">
    <location>
        <position position="985"/>
    </location>
</feature>
<feature type="binding site" evidence="7">
    <location>
        <position position="21"/>
    </location>
    <ligand>
        <name>Zn(2+)</name>
        <dbReference type="ChEBI" id="CHEBI:29105"/>
        <label>1</label>
    </ligand>
</feature>
<feature type="binding site" evidence="7">
    <location>
        <position position="24"/>
    </location>
    <ligand>
        <name>Zn(2+)</name>
        <dbReference type="ChEBI" id="CHEBI:29105"/>
        <label>1</label>
    </ligand>
</feature>
<feature type="binding site" evidence="7">
    <location>
        <position position="53"/>
    </location>
    <ligand>
        <name>Zn(2+)</name>
        <dbReference type="ChEBI" id="CHEBI:29105"/>
        <label>1</label>
    </ligand>
</feature>
<feature type="binding site" evidence="7">
    <location>
        <position position="56"/>
    </location>
    <ligand>
        <name>Zn(2+)</name>
        <dbReference type="ChEBI" id="CHEBI:29105"/>
        <label>1</label>
    </ligand>
</feature>
<feature type="binding site" evidence="7">
    <location>
        <position position="125"/>
    </location>
    <ligand>
        <name>Zn(2+)</name>
        <dbReference type="ChEBI" id="CHEBI:29105"/>
        <label>2</label>
    </ligand>
</feature>
<feature type="binding site" evidence="7">
    <location>
        <position position="128"/>
    </location>
    <ligand>
        <name>Zn(2+)</name>
        <dbReference type="ChEBI" id="CHEBI:29105"/>
        <label>2</label>
    </ligand>
</feature>
<feature type="binding site" evidence="7">
    <location>
        <position position="159"/>
    </location>
    <ligand>
        <name>Zn(2+)</name>
        <dbReference type="ChEBI" id="CHEBI:29105"/>
        <label>2</label>
    </ligand>
</feature>
<feature type="binding site" evidence="7">
    <location>
        <position position="162"/>
    </location>
    <ligand>
        <name>Zn(2+)</name>
        <dbReference type="ChEBI" id="CHEBI:29105"/>
        <label>2</label>
    </ligand>
</feature>
<feature type="binding site" evidence="11">
    <location>
        <position position="294"/>
    </location>
    <ligand>
        <name>Zn(2+)</name>
        <dbReference type="ChEBI" id="CHEBI:29105"/>
        <label>3</label>
    </ligand>
</feature>
<feature type="binding site" evidence="11">
    <location>
        <position position="297"/>
    </location>
    <ligand>
        <name>Zn(2+)</name>
        <dbReference type="ChEBI" id="CHEBI:29105"/>
        <label>3</label>
    </ligand>
</feature>
<feature type="binding site" evidence="11">
    <location>
        <position position="310"/>
    </location>
    <ligand>
        <name>Zn(2+)</name>
        <dbReference type="ChEBI" id="CHEBI:29105"/>
        <label>3</label>
    </ligand>
</feature>
<feature type="binding site" evidence="11">
    <location>
        <position position="320"/>
    </location>
    <ligand>
        <name>Zn(2+)</name>
        <dbReference type="ChEBI" id="CHEBI:29105"/>
        <label>3</label>
    </ligand>
</feature>
<feature type="binding site" evidence="4">
    <location>
        <begin position="859"/>
        <end position="861"/>
    </location>
    <ligand>
        <name>NAD(+)</name>
        <dbReference type="ChEBI" id="CHEBI:57540"/>
    </ligand>
</feature>
<feature type="binding site" evidence="4">
    <location>
        <position position="868"/>
    </location>
    <ligand>
        <name>NAD(+)</name>
        <dbReference type="ChEBI" id="CHEBI:57540"/>
    </ligand>
</feature>
<feature type="binding site" evidence="4">
    <location>
        <position position="875"/>
    </location>
    <ligand>
        <name>NAD(+)</name>
        <dbReference type="ChEBI" id="CHEBI:57540"/>
    </ligand>
</feature>
<feature type="binding site" evidence="4">
    <location>
        <position position="901"/>
    </location>
    <ligand>
        <name>NAD(+)</name>
        <dbReference type="ChEBI" id="CHEBI:57540"/>
    </ligand>
</feature>
<feature type="modified residue" description="PolyADP-ribosyl glutamic acid" evidence="5">
    <location>
        <position position="403"/>
    </location>
</feature>
<feature type="modified residue" description="PolyADP-ribosyl glutamic acid" evidence="5">
    <location>
        <position position="404"/>
    </location>
</feature>
<feature type="modified residue" description="PolyADP-ribosyl glutamic acid" evidence="5">
    <location>
        <position position="410"/>
    </location>
</feature>
<feature type="modified residue" description="PolyADP-ribosyl glutamic acid" evidence="5">
    <location>
        <position position="411"/>
    </location>
</feature>
<feature type="modified residue" description="PolyADP-ribosyl glutamic acid" evidence="5">
    <location>
        <position position="432"/>
    </location>
</feature>
<feature type="modified residue" description="PolyADP-ribosyl glutamic acid" evidence="5">
    <location>
        <position position="434"/>
    </location>
</feature>
<feature type="modified residue" description="PolyADP-ribosyl glutamic acid" evidence="5">
    <location>
        <position position="441"/>
    </location>
</feature>
<feature type="modified residue" description="PolyADP-ribosyl glutamic acid" evidence="5">
    <location>
        <position position="442"/>
    </location>
</feature>
<feature type="modified residue" description="PolyADP-ribosyl glutamic acid" evidence="5">
    <location>
        <position position="453"/>
    </location>
</feature>
<feature type="modified residue" description="PolyADP-ribosyl glutamic acid" evidence="5">
    <location>
        <position position="454"/>
    </location>
</feature>
<feature type="modified residue" description="PolyADP-ribosyl glutamic acid" evidence="5">
    <location>
        <position position="468"/>
    </location>
</feature>
<feature type="modified residue" description="PolyADP-ribosyl glutamic acid" evidence="5">
    <location>
        <position position="481"/>
    </location>
</feature>
<feature type="modified residue" description="PolyADP-ribosyl glutamic acid" evidence="5">
    <location>
        <position position="485"/>
    </location>
</feature>
<feature type="modified residue" description="PolyADP-ribosyl glutamic acid" evidence="5">
    <location>
        <position position="488"/>
    </location>
</feature>
<feature type="modified residue" description="PolyADP-ribosyl glutamic acid" evidence="5">
    <location>
        <position position="509"/>
    </location>
</feature>
<feature type="modified residue" description="PolyADP-ribosyl glutamic acid" evidence="5">
    <location>
        <position position="510"/>
    </location>
</feature>
<feature type="modified residue" description="PolyADP-ribosyl glutamic acid" evidence="5">
    <location>
        <position position="517"/>
    </location>
</feature>
<feature type="sequence conflict" description="In Ref. 1; CAA36917." evidence="13" ref="1">
    <original>A</original>
    <variation>R</variation>
    <location>
        <position position="895"/>
    </location>
</feature>
<feature type="helix" evidence="15">
    <location>
        <begin position="664"/>
        <end position="673"/>
    </location>
</feature>
<feature type="helix" evidence="15">
    <location>
        <begin position="676"/>
        <end position="685"/>
    </location>
</feature>
<feature type="turn" evidence="15">
    <location>
        <begin position="690"/>
        <end position="692"/>
    </location>
</feature>
<feature type="helix" evidence="15">
    <location>
        <begin position="695"/>
        <end position="697"/>
    </location>
</feature>
<feature type="helix" evidence="15">
    <location>
        <begin position="700"/>
        <end position="719"/>
    </location>
</feature>
<feature type="helix" evidence="15">
    <location>
        <begin position="723"/>
        <end position="736"/>
    </location>
</feature>
<feature type="strand" evidence="15">
    <location>
        <begin position="742"/>
        <end position="744"/>
    </location>
</feature>
<feature type="helix" evidence="15">
    <location>
        <begin position="752"/>
        <end position="776"/>
    </location>
</feature>
<feature type="strand" evidence="15">
    <location>
        <begin position="782"/>
        <end position="784"/>
    </location>
</feature>
<feature type="helix" evidence="15">
    <location>
        <begin position="786"/>
        <end position="793"/>
    </location>
</feature>
<feature type="strand" evidence="15">
    <location>
        <begin position="796"/>
        <end position="800"/>
    </location>
</feature>
<feature type="helix" evidence="15">
    <location>
        <begin position="806"/>
        <end position="817"/>
    </location>
</feature>
<feature type="helix" evidence="14">
    <location>
        <begin position="821"/>
        <end position="823"/>
    </location>
</feature>
<feature type="strand" evidence="15">
    <location>
        <begin position="827"/>
        <end position="838"/>
    </location>
</feature>
<feature type="helix" evidence="15">
    <location>
        <begin position="841"/>
        <end position="845"/>
    </location>
</feature>
<feature type="helix" evidence="15">
    <location>
        <begin position="846"/>
        <end position="850"/>
    </location>
</feature>
<feature type="strand" evidence="15">
    <location>
        <begin position="854"/>
        <end position="861"/>
    </location>
</feature>
<feature type="helix" evidence="15">
    <location>
        <begin position="863"/>
        <end position="865"/>
    </location>
</feature>
<feature type="helix" evidence="15">
    <location>
        <begin position="866"/>
        <end position="872"/>
    </location>
</feature>
<feature type="helix" evidence="14">
    <location>
        <begin position="883"/>
        <end position="885"/>
    </location>
</feature>
<feature type="strand" evidence="15">
    <location>
        <begin position="890"/>
        <end position="897"/>
    </location>
</feature>
<feature type="helix" evidence="15">
    <location>
        <begin position="898"/>
        <end position="902"/>
    </location>
</feature>
<feature type="helix" evidence="15">
    <location>
        <begin position="903"/>
        <end position="905"/>
    </location>
</feature>
<feature type="strand" evidence="15">
    <location>
        <begin position="909"/>
        <end position="911"/>
    </location>
</feature>
<feature type="strand" evidence="15">
    <location>
        <begin position="913"/>
        <end position="922"/>
    </location>
</feature>
<feature type="strand" evidence="15">
    <location>
        <begin position="925"/>
        <end position="931"/>
    </location>
</feature>
<feature type="strand" evidence="15">
    <location>
        <begin position="944"/>
        <end position="947"/>
    </location>
</feature>
<feature type="strand" evidence="15">
    <location>
        <begin position="950"/>
        <end position="953"/>
    </location>
</feature>
<feature type="turn" evidence="15">
    <location>
        <begin position="955"/>
        <end position="957"/>
    </location>
</feature>
<feature type="strand" evidence="15">
    <location>
        <begin position="959"/>
        <end position="961"/>
    </location>
</feature>
<feature type="strand" evidence="15">
    <location>
        <begin position="964"/>
        <end position="966"/>
    </location>
</feature>
<feature type="strand" evidence="15">
    <location>
        <begin position="971"/>
        <end position="973"/>
    </location>
</feature>
<feature type="strand" evidence="15">
    <location>
        <begin position="978"/>
        <end position="980"/>
    </location>
</feature>
<feature type="strand" evidence="15">
    <location>
        <begin position="985"/>
        <end position="990"/>
    </location>
</feature>
<feature type="helix" evidence="15">
    <location>
        <begin position="991"/>
        <end position="993"/>
    </location>
</feature>
<feature type="strand" evidence="15">
    <location>
        <begin position="994"/>
        <end position="1005"/>
    </location>
</feature>
<reference key="1">
    <citation type="journal article" date="1991" name="Gene">
        <title>Chicken poly(ADP-ribose) synthetase: complete deduced amino acid sequence and comparison with mammalian enzyme sequences.</title>
        <authorList>
            <person name="Ittel M.-E."/>
            <person name="Garnier J.-M."/>
            <person name="Jeltsch J.-M."/>
            <person name="Niedergang C."/>
        </authorList>
    </citation>
    <scope>NUCLEOTIDE SEQUENCE [MRNA]</scope>
    <source>
        <tissue>Oviduct</tissue>
    </source>
</reference>
<reference key="2">
    <citation type="journal article" date="1996" name="Proc. Natl. Acad. Sci. U.S.A.">
        <title>Structure of the catalytic fragment of poly(AD-ribose) polymerase from chicken.</title>
        <authorList>
            <person name="Ruf A."/>
            <person name="Mennissier-de Murcia J."/>
            <person name="de Murcia G.M."/>
            <person name="Schulz G.E."/>
        </authorList>
    </citation>
    <scope>X-RAY CRYSTALLOGRAPHY (2.5 ANGSTROMS) OF 659-1011</scope>
</reference>
<reference key="3">
    <citation type="journal article" date="1998" name="Biochemistry">
        <title>Inhibitor and NAD+ binding to poly(ADP-ribose) polymerase as derived from crystal structures and homology modeling.</title>
        <authorList>
            <person name="Ruf A."/>
            <person name="de Murcia G.M."/>
            <person name="Schulz G.E."/>
        </authorList>
    </citation>
    <scope>X-RAY CRYSTALLOGRAPHY (2.3 ANGSTROMS) OF 659-1011</scope>
    <scope>SEQUENCE REVISION TO 895</scope>
</reference>
<reference key="4">
    <citation type="journal article" date="1998" name="J. Mol. Biol.">
        <title>The mechanism of the elongation and branching reaction of poly(ADP-ribose) polymerase as derived from crystal structures and mutagenesis.</title>
        <authorList>
            <person name="Ruf A."/>
            <person name="Rolli V."/>
            <person name="de Murcia G.M."/>
            <person name="Schulz G.E."/>
        </authorList>
    </citation>
    <scope>X-RAY CRYSTALLOGRAPHY (2.25 ANGSTROMS) OF 659-1011</scope>
</reference>
<proteinExistence type="evidence at protein level"/>
<gene>
    <name type="primary">PARP1</name>
    <name type="synonym">ADPRT</name>
</gene>
<sequence length="1011" mass="113520">MAETGDKPYRAEYAKSGRASCKKCGESIAKDSLRLALMVQSPMFDGKVPHWHHYSCFWKRARIVSHTDIDGFPELRWEDQEKIKKAIETGALQEEKGGTRKEVGKAEKSLTDFAAEYAKSNRSTCKGCEQKIEKGQIRISKKMVHPEKPQLGMIDNWYHPDCFVSRRAELGFLPAYGATQLLGFSILKAEDKETLKKQLPATKTEGKRKGEEVDGNVVAKKKSRKEKEKESKQEKQLKEQTELIWGIKDELRKVCSTNDLKELLIANKQEVPSGENAILDRVADGMAFGALLPCEECKGQFVFKSDAYYCSGDITAWTKCVAKTQTPNRKDWVIPKEFREIPYLKKFKCKKQDRIFPPEAATVNSAPPPPASAPLTETVTAPQDKPLTNMKILTLGKLSKNKEEVKNIVEELGGKMTTTANKATLCISTQKEVEKMSKKMEEVKDAKVRVVSEEFLKDVKSSNKGFQELLSLHAISPWGAEVKTEHQEVAVDGKCSKPANMKSAGKVKEEQGPSKSEKKMKLTVKGGAAVDPDSGLEDSAHVFEKGGKIFSATLGLVDIVKGTNSYYKLQLLEDDRESRYWVFRSWGRVGTVIGSNKLEQMPSKEDAVEHFLNLYEEKTGNSWHSKNFTKYPKKFYPLEIDYGQDEEAVRKLTVSAGTKSKLAKPIQDLIKMIFDVESMKKAMVEFEIDLQKMPLGKLSKRQIQSAYSILNEVQQAVSDGGSESQILDLSNRFYTLIPHDFGMKKPPLLSNLEYIQAKVQMLDNLLDIEVAYSLLRGGNEDGDKDPIDINYEKLRTDIKVVDKDSEEAKIIKQYVKNTHAATHNAYDLKVVEIFRIEREGESQRYKPFKQLHNRQLLWHGSRTTNFAGILSQGLRIAPPEAPVTGYMFGKGIYFADMVSKSANYCHTSQADPIGLILLGEVALGNMYELKNASHITKLPKGKHSVKGLGKTAPDPTATTTLDGVEVPLGNGISTGINDTCLLYNEYIVYDVAQVNLKYLLKLKFNYKTSLW</sequence>
<evidence type="ECO:0000250" key="1">
    <source>
        <dbReference type="UniProtKB" id="P09874"/>
    </source>
</evidence>
<evidence type="ECO:0000250" key="2">
    <source>
        <dbReference type="UniProtKB" id="P11103"/>
    </source>
</evidence>
<evidence type="ECO:0000250" key="3">
    <source>
        <dbReference type="UniProtKB" id="Q5RHR0"/>
    </source>
</evidence>
<evidence type="ECO:0000250" key="4">
    <source>
        <dbReference type="UniProtKB" id="Q9UGN5"/>
    </source>
</evidence>
<evidence type="ECO:0000255" key="5"/>
<evidence type="ECO:0000255" key="6">
    <source>
        <dbReference type="PROSITE-ProRule" id="PRU00033"/>
    </source>
</evidence>
<evidence type="ECO:0000255" key="7">
    <source>
        <dbReference type="PROSITE-ProRule" id="PRU00264"/>
    </source>
</evidence>
<evidence type="ECO:0000255" key="8">
    <source>
        <dbReference type="PROSITE-ProRule" id="PRU00397"/>
    </source>
</evidence>
<evidence type="ECO:0000255" key="9">
    <source>
        <dbReference type="PROSITE-ProRule" id="PRU00398"/>
    </source>
</evidence>
<evidence type="ECO:0000255" key="10">
    <source>
        <dbReference type="PROSITE-ProRule" id="PRU01321"/>
    </source>
</evidence>
<evidence type="ECO:0000255" key="11">
    <source>
        <dbReference type="PROSITE-ProRule" id="PRU01351"/>
    </source>
</evidence>
<evidence type="ECO:0000256" key="12">
    <source>
        <dbReference type="SAM" id="MobiDB-lite"/>
    </source>
</evidence>
<evidence type="ECO:0000305" key="13"/>
<evidence type="ECO:0007829" key="14">
    <source>
        <dbReference type="PDB" id="1EFY"/>
    </source>
</evidence>
<evidence type="ECO:0007829" key="15">
    <source>
        <dbReference type="PDB" id="6I8M"/>
    </source>
</evidence>
<name>PARP1_CHICK</name>
<organism>
    <name type="scientific">Gallus gallus</name>
    <name type="common">Chicken</name>
    <dbReference type="NCBI Taxonomy" id="9031"/>
    <lineage>
        <taxon>Eukaryota</taxon>
        <taxon>Metazoa</taxon>
        <taxon>Chordata</taxon>
        <taxon>Craniata</taxon>
        <taxon>Vertebrata</taxon>
        <taxon>Euteleostomi</taxon>
        <taxon>Archelosauria</taxon>
        <taxon>Archosauria</taxon>
        <taxon>Dinosauria</taxon>
        <taxon>Saurischia</taxon>
        <taxon>Theropoda</taxon>
        <taxon>Coelurosauria</taxon>
        <taxon>Aves</taxon>
        <taxon>Neognathae</taxon>
        <taxon>Galloanserae</taxon>
        <taxon>Galliformes</taxon>
        <taxon>Phasianidae</taxon>
        <taxon>Phasianinae</taxon>
        <taxon>Gallus</taxon>
    </lineage>
</organism>
<keyword id="KW-0002">3D-structure</keyword>
<keyword id="KW-0013">ADP-ribosylation</keyword>
<keyword id="KW-0021">Allosteric enzyme</keyword>
<keyword id="KW-0158">Chromosome</keyword>
<keyword id="KW-0963">Cytoplasm</keyword>
<keyword id="KW-0227">DNA damage</keyword>
<keyword id="KW-0234">DNA repair</keyword>
<keyword id="KW-0238">DNA-binding</keyword>
<keyword id="KW-0328">Glycosyltransferase</keyword>
<keyword id="KW-0391">Immunity</keyword>
<keyword id="KW-0399">Innate immunity</keyword>
<keyword id="KW-1017">Isopeptide bond</keyword>
<keyword id="KW-0479">Metal-binding</keyword>
<keyword id="KW-0520">NAD</keyword>
<keyword id="KW-0548">Nucleotidyltransferase</keyword>
<keyword id="KW-0539">Nucleus</keyword>
<keyword id="KW-1185">Reference proteome</keyword>
<keyword id="KW-0677">Repeat</keyword>
<keyword id="KW-0804">Transcription</keyword>
<keyword id="KW-0805">Transcription regulation</keyword>
<keyword id="KW-0808">Transferase</keyword>
<keyword id="KW-0862">Zinc</keyword>
<keyword id="KW-0863">Zinc-finger</keyword>